<evidence type="ECO:0000250" key="1"/>
<evidence type="ECO:0000250" key="2">
    <source>
        <dbReference type="UniProtKB" id="Q8TB96"/>
    </source>
</evidence>
<evidence type="ECO:0000255" key="3"/>
<evidence type="ECO:0000305" key="4"/>
<evidence type="ECO:0000312" key="5">
    <source>
        <dbReference type="RGD" id="619898"/>
    </source>
</evidence>
<evidence type="ECO:0007744" key="6">
    <source>
    </source>
</evidence>
<accession>Q8R4E1</accession>
<name>TIP_RAT</name>
<organism>
    <name type="scientific">Rattus norvegicus</name>
    <name type="common">Rat</name>
    <dbReference type="NCBI Taxonomy" id="10116"/>
    <lineage>
        <taxon>Eukaryota</taxon>
        <taxon>Metazoa</taxon>
        <taxon>Chordata</taxon>
        <taxon>Craniata</taxon>
        <taxon>Vertebrata</taxon>
        <taxon>Euteleostomi</taxon>
        <taxon>Mammalia</taxon>
        <taxon>Eutheria</taxon>
        <taxon>Euarchontoglires</taxon>
        <taxon>Glires</taxon>
        <taxon>Rodentia</taxon>
        <taxon>Myomorpha</taxon>
        <taxon>Muroidea</taxon>
        <taxon>Muridae</taxon>
        <taxon>Murinae</taxon>
        <taxon>Rattus</taxon>
    </lineage>
</organism>
<protein>
    <recommendedName>
        <fullName>T-cell immunomodulatory protein</fullName>
        <shortName>Protein TIP</shortName>
    </recommendedName>
    <alternativeName>
        <fullName>CDA08-like protein</fullName>
    </alternativeName>
    <alternativeName>
        <fullName>Integrin-alpha FG-GAP repeat-containing protein 1</fullName>
    </alternativeName>
    <alternativeName>
        <fullName evidence="2">Linkin</fullName>
    </alternativeName>
</protein>
<sequence>MAAGLLPSARAVLALLFLGLALLSVGPAPAQALHNVTAELFGGEAWGTLAAFGDLNSDKQTDLFVLRERNDLIVFLADQSAPYFKPKVKVSLKNFSALVTSVVPGDYDGDSQMDVLLTYFPQNHSNNELGAVIFWGQNQTLDPKNMTILNRTFHDQPLIMDFNGDLIPDVFAITNESSQPQILLGGDLSWHPALTTKSKMRDPHSRAFIDLTEDFTADLFLTTLSASNTFQFEIWENLGGNFSIRSVFEKPKNLVVVGQSAFADFDGDGHMDHLLPGCEDKDCQKSAIYLMRSGTGQWAPVLQDSSNKGTLWGFVPFVHEERPTAIPVPLTLHIGDYNMDGYPDALAILKNTSGSNQQAFLLENVPCNNASCEEVHRMFKVYWDLAGLNLIKDAMVATFFDIYEDGTLDIIVLSKGYTKSDVAIHTLKNNFEADAYFVKVIVLSGLCSSDCPRKITPFGVNQPGPYIMYTTVDANGYLKNGSAGQLSQSAHLALQLPYNVLGLGRSANFLDHLFVGIPRPSGEKSIRKQEWTAIIPNSQLMVIPYPHSVPRSWSAKLYLTPSNIVLLTAVALTGVCVFILAIIAILHWQEKKADDREKRQEAHRFHFDAM</sequence>
<reference key="1">
    <citation type="submission" date="2002-02" db="EMBL/GenBank/DDBJ databases">
        <authorList>
            <person name="Vie-Luton M.-P."/>
            <person name="Francon J."/>
        </authorList>
    </citation>
    <scope>NUCLEOTIDE SEQUENCE [MRNA]</scope>
    <source>
        <strain>Sprague-Dawley</strain>
        <tissue>Cerebellum</tissue>
    </source>
</reference>
<reference key="2">
    <citation type="journal article" date="2013" name="J. Proteome Res.">
        <title>Site-specific glycan-peptide analysis for determination of N-glycoproteome heterogeneity.</title>
        <authorList>
            <person name="Parker B.L."/>
            <person name="Thaysen-Andersen M."/>
            <person name="Solis N."/>
            <person name="Scott N.E."/>
            <person name="Larsen M.R."/>
            <person name="Graham M.E."/>
            <person name="Packer N.H."/>
            <person name="Cordwell S.J."/>
        </authorList>
    </citation>
    <scope>GLYCOSYLATION [LARGE SCALE ANALYSIS] AT ASN-480</scope>
    <scope>IDENTIFICATION BY MASS SPECTROMETRY [LARGE SCALE ANALYSIS]</scope>
    <source>
        <tissue>Brain</tissue>
    </source>
</reference>
<gene>
    <name evidence="5" type="primary">Itfg1</name>
    <name evidence="5" type="synonym">Cda08</name>
    <name evidence="2" type="synonym">Lnkn-1</name>
    <name evidence="2" type="synonym">Tip</name>
</gene>
<keyword id="KW-1003">Cell membrane</keyword>
<keyword id="KW-0325">Glycoprotein</keyword>
<keyword id="KW-0472">Membrane</keyword>
<keyword id="KW-1185">Reference proteome</keyword>
<keyword id="KW-0677">Repeat</keyword>
<keyword id="KW-0964">Secreted</keyword>
<keyword id="KW-0732">Signal</keyword>
<keyword id="KW-0812">Transmembrane</keyword>
<keyword id="KW-1133">Transmembrane helix</keyword>
<proteinExistence type="evidence at protein level"/>
<dbReference type="EMBL" id="AF480856">
    <property type="protein sequence ID" value="AAL84891.1"/>
    <property type="molecule type" value="mRNA"/>
</dbReference>
<dbReference type="FunCoup" id="Q8R4E1">
    <property type="interactions" value="2043"/>
</dbReference>
<dbReference type="STRING" id="10116.ENSRNOP00000021711"/>
<dbReference type="GlyCosmos" id="Q8R4E1">
    <property type="glycosylation" value="11 sites, 2 glycans"/>
</dbReference>
<dbReference type="GlyGen" id="Q8R4E1">
    <property type="glycosylation" value="11 sites, 2 N-linked glycans (1 site)"/>
</dbReference>
<dbReference type="iPTMnet" id="Q8R4E1"/>
<dbReference type="PhosphoSitePlus" id="Q8R4E1"/>
<dbReference type="jPOST" id="Q8R4E1"/>
<dbReference type="PaxDb" id="10116-ENSRNOP00000021711"/>
<dbReference type="AGR" id="RGD:619898"/>
<dbReference type="RGD" id="619898">
    <property type="gene designation" value="Itfg1"/>
</dbReference>
<dbReference type="eggNOG" id="KOG4550">
    <property type="taxonomic scope" value="Eukaryota"/>
</dbReference>
<dbReference type="InParanoid" id="Q8R4E1"/>
<dbReference type="OrthoDB" id="10250728at2759"/>
<dbReference type="PhylomeDB" id="Q8R4E1"/>
<dbReference type="PRO" id="PR:Q8R4E1"/>
<dbReference type="Proteomes" id="UP000002494">
    <property type="component" value="Unplaced"/>
</dbReference>
<dbReference type="GO" id="GO:0005576">
    <property type="term" value="C:extracellular region"/>
    <property type="evidence" value="ECO:0007669"/>
    <property type="project" value="UniProtKB-SubCell"/>
</dbReference>
<dbReference type="GO" id="GO:0005886">
    <property type="term" value="C:plasma membrane"/>
    <property type="evidence" value="ECO:0000318"/>
    <property type="project" value="GO_Central"/>
</dbReference>
<dbReference type="Gene3D" id="2.130.10.130">
    <property type="entry name" value="Integrin alpha, N-terminal"/>
    <property type="match status" value="1"/>
</dbReference>
<dbReference type="InterPro" id="IPR013517">
    <property type="entry name" value="FG-GAP"/>
</dbReference>
<dbReference type="InterPro" id="IPR028994">
    <property type="entry name" value="Integrin_alpha_N"/>
</dbReference>
<dbReference type="InterPro" id="IPR024881">
    <property type="entry name" value="Tip"/>
</dbReference>
<dbReference type="PANTHER" id="PTHR13412:SF0">
    <property type="entry name" value="T-CELL IMMUNOMODULATORY PROTEIN"/>
    <property type="match status" value="1"/>
</dbReference>
<dbReference type="PANTHER" id="PTHR13412">
    <property type="entry name" value="T-CELL IMMUNOMODULATORY PROTEIN HOMOLOG"/>
    <property type="match status" value="1"/>
</dbReference>
<dbReference type="Pfam" id="PF23122">
    <property type="entry name" value="C2_ITFG1"/>
    <property type="match status" value="1"/>
</dbReference>
<dbReference type="Pfam" id="PF13517">
    <property type="entry name" value="FG-GAP_3"/>
    <property type="match status" value="1"/>
</dbReference>
<dbReference type="SUPFAM" id="SSF69318">
    <property type="entry name" value="Integrin alpha N-terminal domain"/>
    <property type="match status" value="1"/>
</dbReference>
<comment type="function">
    <text evidence="1">Modulator of T-cell function. Has a protective effect in graft versus host disease model (By similarity).</text>
</comment>
<comment type="subunit">
    <text evidence="2">Interacts with RUVBL1, RUVBL2 and alpha-tubulin.</text>
</comment>
<comment type="subcellular location">
    <subcellularLocation>
        <location evidence="1">Secreted</location>
    </subcellularLocation>
    <subcellularLocation>
        <location evidence="4">Cell membrane</location>
        <topology evidence="4">Single-pass type I membrane protein</topology>
    </subcellularLocation>
</comment>
<comment type="similarity">
    <text evidence="4">Belongs to the TIP family.</text>
</comment>
<feature type="signal peptide" evidence="3">
    <location>
        <begin position="1"/>
        <end position="32"/>
    </location>
</feature>
<feature type="chain" id="PRO_0000034356" description="T-cell immunomodulatory protein">
    <location>
        <begin position="33"/>
        <end position="610"/>
    </location>
</feature>
<feature type="transmembrane region" description="Helical" evidence="3">
    <location>
        <begin position="564"/>
        <end position="584"/>
    </location>
</feature>
<feature type="repeat" description="FG-GAP 1; atypical">
    <location>
        <begin position="98"/>
        <end position="135"/>
    </location>
</feature>
<feature type="repeat" description="FG-GAP 2; atypical">
    <location>
        <begin position="153"/>
        <end position="183"/>
    </location>
</feature>
<feature type="repeat" description="FG-GAP 3; atypical">
    <location>
        <begin position="256"/>
        <end position="291"/>
    </location>
</feature>
<feature type="glycosylation site" description="N-linked (GlcNAc...) asparagine" evidence="3">
    <location>
        <position position="35"/>
    </location>
</feature>
<feature type="glycosylation site" description="N-linked (GlcNAc...) asparagine" evidence="3">
    <location>
        <position position="94"/>
    </location>
</feature>
<feature type="glycosylation site" description="N-linked (GlcNAc...) asparagine" evidence="3">
    <location>
        <position position="123"/>
    </location>
</feature>
<feature type="glycosylation site" description="N-linked (GlcNAc...) asparagine" evidence="3">
    <location>
        <position position="138"/>
    </location>
</feature>
<feature type="glycosylation site" description="N-linked (GlcNAc...) asparagine" evidence="3">
    <location>
        <position position="145"/>
    </location>
</feature>
<feature type="glycosylation site" description="N-linked (GlcNAc...) asparagine" evidence="3">
    <location>
        <position position="150"/>
    </location>
</feature>
<feature type="glycosylation site" description="N-linked (GlcNAc...) asparagine" evidence="3">
    <location>
        <position position="175"/>
    </location>
</feature>
<feature type="glycosylation site" description="N-linked (GlcNAc...) asparagine" evidence="3">
    <location>
        <position position="241"/>
    </location>
</feature>
<feature type="glycosylation site" description="N-linked (GlcNAc...) asparagine" evidence="3">
    <location>
        <position position="351"/>
    </location>
</feature>
<feature type="glycosylation site" description="N-linked (GlcNAc...) asparagine" evidence="3">
    <location>
        <position position="369"/>
    </location>
</feature>
<feature type="glycosylation site" description="N-linked (GlcNAc...) asparagine" evidence="6">
    <location>
        <position position="480"/>
    </location>
</feature>